<reference key="1">
    <citation type="journal article" date="2006" name="Proc. Natl. Acad. Sci. U.S.A.">
        <title>Multireplicon genome architecture of Lactobacillus salivarius.</title>
        <authorList>
            <person name="Claesson M.J."/>
            <person name="Li Y."/>
            <person name="Leahy S."/>
            <person name="Canchaya C."/>
            <person name="van Pijkeren J.P."/>
            <person name="Cerdeno-Tarraga A.M."/>
            <person name="Parkhill J."/>
            <person name="Flynn S."/>
            <person name="O'Sullivan G.C."/>
            <person name="Collins J.K."/>
            <person name="Higgins D."/>
            <person name="Shanahan F."/>
            <person name="Fitzgerald G.F."/>
            <person name="van Sinderen D."/>
            <person name="O'Toole P.W."/>
        </authorList>
    </citation>
    <scope>NUCLEOTIDE SEQUENCE [LARGE SCALE GENOMIC DNA]</scope>
    <source>
        <strain>UCC118</strain>
    </source>
</reference>
<organism>
    <name type="scientific">Ligilactobacillus salivarius (strain UCC118)</name>
    <name type="common">Lactobacillus salivarius</name>
    <dbReference type="NCBI Taxonomy" id="362948"/>
    <lineage>
        <taxon>Bacteria</taxon>
        <taxon>Bacillati</taxon>
        <taxon>Bacillota</taxon>
        <taxon>Bacilli</taxon>
        <taxon>Lactobacillales</taxon>
        <taxon>Lactobacillaceae</taxon>
        <taxon>Ligilactobacillus</taxon>
    </lineage>
</organism>
<comment type="similarity">
    <text evidence="1">Belongs to the bacterial ribosomal protein bL32 family.</text>
</comment>
<sequence length="58" mass="6602">MAVPARRTSKTRKRLRRTHYKLQVPGMSACPNCGELRKAHHVCPSCGYYGDKEVVKTK</sequence>
<evidence type="ECO:0000255" key="1">
    <source>
        <dbReference type="HAMAP-Rule" id="MF_00340"/>
    </source>
</evidence>
<evidence type="ECO:0000305" key="2"/>
<gene>
    <name evidence="1" type="primary">rpmF</name>
    <name type="ordered locus">LSL_0507</name>
</gene>
<feature type="chain" id="PRO_0000296487" description="Large ribosomal subunit protein bL32">
    <location>
        <begin position="1"/>
        <end position="58"/>
    </location>
</feature>
<proteinExistence type="inferred from homology"/>
<protein>
    <recommendedName>
        <fullName evidence="1">Large ribosomal subunit protein bL32</fullName>
    </recommendedName>
    <alternativeName>
        <fullName evidence="2">50S ribosomal protein L32</fullName>
    </alternativeName>
</protein>
<name>RL32_LIGS1</name>
<keyword id="KW-1185">Reference proteome</keyword>
<keyword id="KW-0687">Ribonucleoprotein</keyword>
<keyword id="KW-0689">Ribosomal protein</keyword>
<accession>Q1WUL9</accession>
<dbReference type="EMBL" id="CP000233">
    <property type="protein sequence ID" value="ABD99316.1"/>
    <property type="molecule type" value="Genomic_DNA"/>
</dbReference>
<dbReference type="RefSeq" id="WP_003699811.1">
    <property type="nucleotide sequence ID" value="NC_007929.1"/>
</dbReference>
<dbReference type="RefSeq" id="YP_535399.1">
    <property type="nucleotide sequence ID" value="NC_007929.1"/>
</dbReference>
<dbReference type="SMR" id="Q1WUL9"/>
<dbReference type="STRING" id="362948.LSL_0507"/>
<dbReference type="KEGG" id="lsl:LSL_0507"/>
<dbReference type="PATRIC" id="fig|362948.14.peg.585"/>
<dbReference type="HOGENOM" id="CLU_129084_1_3_9"/>
<dbReference type="OrthoDB" id="9812874at2"/>
<dbReference type="Proteomes" id="UP000006559">
    <property type="component" value="Chromosome"/>
</dbReference>
<dbReference type="GO" id="GO:0015934">
    <property type="term" value="C:large ribosomal subunit"/>
    <property type="evidence" value="ECO:0007669"/>
    <property type="project" value="InterPro"/>
</dbReference>
<dbReference type="GO" id="GO:0003735">
    <property type="term" value="F:structural constituent of ribosome"/>
    <property type="evidence" value="ECO:0007669"/>
    <property type="project" value="InterPro"/>
</dbReference>
<dbReference type="GO" id="GO:0006412">
    <property type="term" value="P:translation"/>
    <property type="evidence" value="ECO:0007669"/>
    <property type="project" value="UniProtKB-UniRule"/>
</dbReference>
<dbReference type="HAMAP" id="MF_00340">
    <property type="entry name" value="Ribosomal_bL32"/>
    <property type="match status" value="1"/>
</dbReference>
<dbReference type="InterPro" id="IPR002677">
    <property type="entry name" value="Ribosomal_bL32"/>
</dbReference>
<dbReference type="InterPro" id="IPR044957">
    <property type="entry name" value="Ribosomal_bL32_bact"/>
</dbReference>
<dbReference type="InterPro" id="IPR011332">
    <property type="entry name" value="Ribosomal_zn-bd"/>
</dbReference>
<dbReference type="NCBIfam" id="TIGR01031">
    <property type="entry name" value="rpmF_bact"/>
    <property type="match status" value="1"/>
</dbReference>
<dbReference type="PANTHER" id="PTHR35534">
    <property type="entry name" value="50S RIBOSOMAL PROTEIN L32"/>
    <property type="match status" value="1"/>
</dbReference>
<dbReference type="PANTHER" id="PTHR35534:SF2">
    <property type="entry name" value="LARGE RIBOSOMAL SUBUNIT PROTEIN BL32"/>
    <property type="match status" value="1"/>
</dbReference>
<dbReference type="Pfam" id="PF01783">
    <property type="entry name" value="Ribosomal_L32p"/>
    <property type="match status" value="1"/>
</dbReference>
<dbReference type="SUPFAM" id="SSF57829">
    <property type="entry name" value="Zn-binding ribosomal proteins"/>
    <property type="match status" value="1"/>
</dbReference>